<evidence type="ECO:0000250" key="1"/>
<evidence type="ECO:0000256" key="2">
    <source>
        <dbReference type="SAM" id="MobiDB-lite"/>
    </source>
</evidence>
<evidence type="ECO:0000305" key="3"/>
<keyword id="KW-0479">Metal-binding</keyword>
<keyword id="KW-0507">mRNA processing</keyword>
<keyword id="KW-0508">mRNA splicing</keyword>
<keyword id="KW-0539">Nucleus</keyword>
<keyword id="KW-1185">Reference proteome</keyword>
<keyword id="KW-0747">Spliceosome</keyword>
<keyword id="KW-0862">Zinc</keyword>
<keyword id="KW-0863">Zinc-finger</keyword>
<gene>
    <name type="primary">SLU7</name>
    <name type="ordered locus">CND02870</name>
</gene>
<comment type="function">
    <text evidence="1">Involved in pre-mRNA splicing.</text>
</comment>
<comment type="subunit">
    <text evidence="1">Associated with the spliceosome.</text>
</comment>
<comment type="subcellular location">
    <subcellularLocation>
        <location evidence="1">Nucleus</location>
    </subcellularLocation>
</comment>
<comment type="similarity">
    <text evidence="3">Belongs to the SLU7 family.</text>
</comment>
<dbReference type="EMBL" id="AE017344">
    <property type="protein sequence ID" value="AAW43157.1"/>
    <property type="molecule type" value="Genomic_DNA"/>
</dbReference>
<dbReference type="RefSeq" id="XP_570464.1">
    <property type="nucleotide sequence ID" value="XM_570464.1"/>
</dbReference>
<dbReference type="SMR" id="P0CR52"/>
<dbReference type="FunCoup" id="P0CR52">
    <property type="interactions" value="626"/>
</dbReference>
<dbReference type="STRING" id="214684.P0CR52"/>
<dbReference type="PaxDb" id="214684-P0CR52"/>
<dbReference type="EnsemblFungi" id="AAW43157">
    <property type="protein sequence ID" value="AAW43157"/>
    <property type="gene ID" value="CND02870"/>
</dbReference>
<dbReference type="GeneID" id="3257383"/>
<dbReference type="KEGG" id="cne:CND02870"/>
<dbReference type="VEuPathDB" id="FungiDB:CND02870"/>
<dbReference type="eggNOG" id="KOG2560">
    <property type="taxonomic scope" value="Eukaryota"/>
</dbReference>
<dbReference type="HOGENOM" id="CLU_019317_2_0_1"/>
<dbReference type="InParanoid" id="P0CR52"/>
<dbReference type="OMA" id="KYAWESQ"/>
<dbReference type="OrthoDB" id="249612at2759"/>
<dbReference type="Proteomes" id="UP000002149">
    <property type="component" value="Chromosome 4"/>
</dbReference>
<dbReference type="GO" id="GO:0005681">
    <property type="term" value="C:spliceosomal complex"/>
    <property type="evidence" value="ECO:0000318"/>
    <property type="project" value="GO_Central"/>
</dbReference>
<dbReference type="GO" id="GO:0030628">
    <property type="term" value="F:pre-mRNA 3'-splice site binding"/>
    <property type="evidence" value="ECO:0007669"/>
    <property type="project" value="InterPro"/>
</dbReference>
<dbReference type="GO" id="GO:0008270">
    <property type="term" value="F:zinc ion binding"/>
    <property type="evidence" value="ECO:0007669"/>
    <property type="project" value="UniProtKB-KW"/>
</dbReference>
<dbReference type="GO" id="GO:0000398">
    <property type="term" value="P:mRNA splicing, via spliceosome"/>
    <property type="evidence" value="ECO:0007669"/>
    <property type="project" value="InterPro"/>
</dbReference>
<dbReference type="GO" id="GO:0008380">
    <property type="term" value="P:RNA splicing"/>
    <property type="evidence" value="ECO:0000318"/>
    <property type="project" value="GO_Central"/>
</dbReference>
<dbReference type="InterPro" id="IPR021715">
    <property type="entry name" value="Slu7_dom"/>
</dbReference>
<dbReference type="InterPro" id="IPR039974">
    <property type="entry name" value="Splicing_factor_SLU7"/>
</dbReference>
<dbReference type="PANTHER" id="PTHR12942:SF2">
    <property type="entry name" value="PRE-MRNA-SPLICING FACTOR SLU7"/>
    <property type="match status" value="1"/>
</dbReference>
<dbReference type="PANTHER" id="PTHR12942">
    <property type="entry name" value="STEP II SPLICING FACTOR SLU7"/>
    <property type="match status" value="1"/>
</dbReference>
<dbReference type="Pfam" id="PF11708">
    <property type="entry name" value="Slu7"/>
    <property type="match status" value="1"/>
</dbReference>
<proteinExistence type="inferred from homology"/>
<protein>
    <recommendedName>
        <fullName>Pre-mRNA-splicing factor SLU7</fullName>
    </recommendedName>
</protein>
<feature type="chain" id="PRO_0000218546" description="Pre-mRNA-splicing factor SLU7">
    <location>
        <begin position="1"/>
        <end position="574"/>
    </location>
</feature>
<feature type="zinc finger region" description="CCHC-type">
    <location>
        <begin position="100"/>
        <end position="117"/>
    </location>
</feature>
<feature type="region of interest" description="Disordered" evidence="2">
    <location>
        <begin position="1"/>
        <end position="42"/>
    </location>
</feature>
<feature type="region of interest" description="Disordered" evidence="2">
    <location>
        <begin position="195"/>
        <end position="231"/>
    </location>
</feature>
<feature type="region of interest" description="Disordered" evidence="2">
    <location>
        <begin position="481"/>
        <end position="548"/>
    </location>
</feature>
<feature type="region of interest" description="Disordered" evidence="2">
    <location>
        <begin position="555"/>
        <end position="574"/>
    </location>
</feature>
<feature type="compositionally biased region" description="Basic and acidic residues" evidence="2">
    <location>
        <begin position="13"/>
        <end position="28"/>
    </location>
</feature>
<feature type="compositionally biased region" description="Acidic residues" evidence="2">
    <location>
        <begin position="204"/>
        <end position="223"/>
    </location>
</feature>
<feature type="compositionally biased region" description="Basic and acidic residues" evidence="2">
    <location>
        <begin position="491"/>
        <end position="524"/>
    </location>
</feature>
<name>SLU7_CRYNJ</name>
<sequence length="574" mass="65360">MLSTSTSLQGGKVSREEYRRQKDLEAARKAGTAPAALDEQGNAINPHIPEYITKAPWYADTGRPSLAHQRINEQGPHLKLDEWYDRGAKAGPAAKKYRKGACENCGAMTHKMKDCVERPRKRGAKFTNKDIAPDELVQQFEGDYDAKRDRWNGYDPASYKHVVEEYEATEQMRKKYREEEIDQQTSTDMAVVKKLAKKDKEGKVEDDDDDFGSSDEDEDDEDKYADAADQVGQKLDTKTRITVRNLRIREDTAKYLINLDESSAYYDPKTRSMRDAPVRNMNPEDMKFAGDNFQRYSGDATNMQKLQLFAWQSAQKGSNINVSANPTAGELLHREFQQKKEVLKDTNKTSILAKYGGEEHLQRMPNELLSGQTENYVEYSRSGQIIKGRERAKARSKYDEDVYINNHTAIWGSYYDLSTSQWGFACCHSVLPGSYCTGDAGKLANAASSASALLASSNERSKIEEAAEKERESLAEQHLKDLASGKAKKGKEREWDLPQYAKRREDGEELDLDKGRLKNALKEEKKRKKMGEDEAWQQTKKGKTDVTQEELEAYRLSRQAYDDPMSNYQDPEDQ</sequence>
<organism>
    <name type="scientific">Cryptococcus neoformans var. neoformans serotype D (strain JEC21 / ATCC MYA-565)</name>
    <name type="common">Filobasidiella neoformans</name>
    <dbReference type="NCBI Taxonomy" id="214684"/>
    <lineage>
        <taxon>Eukaryota</taxon>
        <taxon>Fungi</taxon>
        <taxon>Dikarya</taxon>
        <taxon>Basidiomycota</taxon>
        <taxon>Agaricomycotina</taxon>
        <taxon>Tremellomycetes</taxon>
        <taxon>Tremellales</taxon>
        <taxon>Cryptococcaceae</taxon>
        <taxon>Cryptococcus</taxon>
        <taxon>Cryptococcus neoformans species complex</taxon>
    </lineage>
</organism>
<accession>P0CR52</accession>
<accession>Q55TV4</accession>
<accession>Q5KII3</accession>
<reference key="1">
    <citation type="journal article" date="2005" name="Science">
        <title>The genome of the basidiomycetous yeast and human pathogen Cryptococcus neoformans.</title>
        <authorList>
            <person name="Loftus B.J."/>
            <person name="Fung E."/>
            <person name="Roncaglia P."/>
            <person name="Rowley D."/>
            <person name="Amedeo P."/>
            <person name="Bruno D."/>
            <person name="Vamathevan J."/>
            <person name="Miranda M."/>
            <person name="Anderson I.J."/>
            <person name="Fraser J.A."/>
            <person name="Allen J.E."/>
            <person name="Bosdet I.E."/>
            <person name="Brent M.R."/>
            <person name="Chiu R."/>
            <person name="Doering T.L."/>
            <person name="Donlin M.J."/>
            <person name="D'Souza C.A."/>
            <person name="Fox D.S."/>
            <person name="Grinberg V."/>
            <person name="Fu J."/>
            <person name="Fukushima M."/>
            <person name="Haas B.J."/>
            <person name="Huang J.C."/>
            <person name="Janbon G."/>
            <person name="Jones S.J.M."/>
            <person name="Koo H.L."/>
            <person name="Krzywinski M.I."/>
            <person name="Kwon-Chung K.J."/>
            <person name="Lengeler K.B."/>
            <person name="Maiti R."/>
            <person name="Marra M.A."/>
            <person name="Marra R.E."/>
            <person name="Mathewson C.A."/>
            <person name="Mitchell T.G."/>
            <person name="Pertea M."/>
            <person name="Riggs F.R."/>
            <person name="Salzberg S.L."/>
            <person name="Schein J.E."/>
            <person name="Shvartsbeyn A."/>
            <person name="Shin H."/>
            <person name="Shumway M."/>
            <person name="Specht C.A."/>
            <person name="Suh B.B."/>
            <person name="Tenney A."/>
            <person name="Utterback T.R."/>
            <person name="Wickes B.L."/>
            <person name="Wortman J.R."/>
            <person name="Wye N.H."/>
            <person name="Kronstad J.W."/>
            <person name="Lodge J.K."/>
            <person name="Heitman J."/>
            <person name="Davis R.W."/>
            <person name="Fraser C.M."/>
            <person name="Hyman R.W."/>
        </authorList>
    </citation>
    <scope>NUCLEOTIDE SEQUENCE [LARGE SCALE GENOMIC DNA]</scope>
    <source>
        <strain>JEC21 / ATCC MYA-565</strain>
    </source>
</reference>